<feature type="chain" id="PRO_0000237300" description="DNA-directed RNA polymerase subunit beta">
    <location>
        <begin position="1"/>
        <end position="1141"/>
    </location>
</feature>
<proteinExistence type="inferred from homology"/>
<organism>
    <name type="scientific">Frankia casuarinae (strain DSM 45818 / CECT 9043 / HFP020203 / CcI3)</name>
    <dbReference type="NCBI Taxonomy" id="106370"/>
    <lineage>
        <taxon>Bacteria</taxon>
        <taxon>Bacillati</taxon>
        <taxon>Actinomycetota</taxon>
        <taxon>Actinomycetes</taxon>
        <taxon>Frankiales</taxon>
        <taxon>Frankiaceae</taxon>
        <taxon>Frankia</taxon>
    </lineage>
</organism>
<reference key="1">
    <citation type="journal article" date="2007" name="Genome Res.">
        <title>Genome characteristics of facultatively symbiotic Frankia sp. strains reflect host range and host plant biogeography.</title>
        <authorList>
            <person name="Normand P."/>
            <person name="Lapierre P."/>
            <person name="Tisa L.S."/>
            <person name="Gogarten J.P."/>
            <person name="Alloisio N."/>
            <person name="Bagnarol E."/>
            <person name="Bassi C.A."/>
            <person name="Berry A.M."/>
            <person name="Bickhart D.M."/>
            <person name="Choisne N."/>
            <person name="Couloux A."/>
            <person name="Cournoyer B."/>
            <person name="Cruveiller S."/>
            <person name="Daubin V."/>
            <person name="Demange N."/>
            <person name="Francino M.P."/>
            <person name="Goltsman E."/>
            <person name="Huang Y."/>
            <person name="Kopp O.R."/>
            <person name="Labarre L."/>
            <person name="Lapidus A."/>
            <person name="Lavire C."/>
            <person name="Marechal J."/>
            <person name="Martinez M."/>
            <person name="Mastronunzio J.E."/>
            <person name="Mullin B.C."/>
            <person name="Niemann J."/>
            <person name="Pujic P."/>
            <person name="Rawnsley T."/>
            <person name="Rouy Z."/>
            <person name="Schenowitz C."/>
            <person name="Sellstedt A."/>
            <person name="Tavares F."/>
            <person name="Tomkins J.P."/>
            <person name="Vallenet D."/>
            <person name="Valverde C."/>
            <person name="Wall L.G."/>
            <person name="Wang Y."/>
            <person name="Medigue C."/>
            <person name="Benson D.R."/>
        </authorList>
    </citation>
    <scope>NUCLEOTIDE SEQUENCE [LARGE SCALE GENOMIC DNA]</scope>
    <source>
        <strain>DSM 45818 / CECT 9043 / HFP020203 / CcI3</strain>
    </source>
</reference>
<keyword id="KW-0240">DNA-directed RNA polymerase</keyword>
<keyword id="KW-0548">Nucleotidyltransferase</keyword>
<keyword id="KW-1185">Reference proteome</keyword>
<keyword id="KW-0804">Transcription</keyword>
<keyword id="KW-0808">Transferase</keyword>
<protein>
    <recommendedName>
        <fullName evidence="1">DNA-directed RNA polymerase subunit beta</fullName>
        <shortName evidence="1">RNAP subunit beta</shortName>
        <ecNumber evidence="1">2.7.7.6</ecNumber>
    </recommendedName>
    <alternativeName>
        <fullName evidence="1">RNA polymerase subunit beta</fullName>
    </alternativeName>
    <alternativeName>
        <fullName evidence="1">Transcriptase subunit beta</fullName>
    </alternativeName>
</protein>
<accession>Q2JFI5</accession>
<evidence type="ECO:0000255" key="1">
    <source>
        <dbReference type="HAMAP-Rule" id="MF_01321"/>
    </source>
</evidence>
<name>RPOB_FRACC</name>
<dbReference type="EC" id="2.7.7.6" evidence="1"/>
<dbReference type="EMBL" id="CP000249">
    <property type="protein sequence ID" value="ABD09957.1"/>
    <property type="molecule type" value="Genomic_DNA"/>
</dbReference>
<dbReference type="RefSeq" id="WP_011435032.1">
    <property type="nucleotide sequence ID" value="NZ_JENI01000032.1"/>
</dbReference>
<dbReference type="SMR" id="Q2JFI5"/>
<dbReference type="STRING" id="106370.Francci3_0573"/>
<dbReference type="KEGG" id="fra:Francci3_0573"/>
<dbReference type="eggNOG" id="COG0085">
    <property type="taxonomic scope" value="Bacteria"/>
</dbReference>
<dbReference type="HOGENOM" id="CLU_000524_4_3_11"/>
<dbReference type="OrthoDB" id="9803954at2"/>
<dbReference type="PhylomeDB" id="Q2JFI5"/>
<dbReference type="Proteomes" id="UP000001937">
    <property type="component" value="Chromosome"/>
</dbReference>
<dbReference type="GO" id="GO:0000428">
    <property type="term" value="C:DNA-directed RNA polymerase complex"/>
    <property type="evidence" value="ECO:0007669"/>
    <property type="project" value="UniProtKB-KW"/>
</dbReference>
<dbReference type="GO" id="GO:0003677">
    <property type="term" value="F:DNA binding"/>
    <property type="evidence" value="ECO:0007669"/>
    <property type="project" value="UniProtKB-UniRule"/>
</dbReference>
<dbReference type="GO" id="GO:0003899">
    <property type="term" value="F:DNA-directed RNA polymerase activity"/>
    <property type="evidence" value="ECO:0007669"/>
    <property type="project" value="UniProtKB-UniRule"/>
</dbReference>
<dbReference type="GO" id="GO:0032549">
    <property type="term" value="F:ribonucleoside binding"/>
    <property type="evidence" value="ECO:0007669"/>
    <property type="project" value="InterPro"/>
</dbReference>
<dbReference type="GO" id="GO:0006351">
    <property type="term" value="P:DNA-templated transcription"/>
    <property type="evidence" value="ECO:0007669"/>
    <property type="project" value="UniProtKB-UniRule"/>
</dbReference>
<dbReference type="CDD" id="cd00653">
    <property type="entry name" value="RNA_pol_B_RPB2"/>
    <property type="match status" value="1"/>
</dbReference>
<dbReference type="FunFam" id="3.90.1800.10:FF:000001">
    <property type="entry name" value="DNA-directed RNA polymerase subunit beta"/>
    <property type="match status" value="1"/>
</dbReference>
<dbReference type="Gene3D" id="2.40.50.100">
    <property type="match status" value="1"/>
</dbReference>
<dbReference type="Gene3D" id="2.40.50.150">
    <property type="match status" value="1"/>
</dbReference>
<dbReference type="Gene3D" id="3.90.1100.10">
    <property type="match status" value="1"/>
</dbReference>
<dbReference type="Gene3D" id="2.30.150.10">
    <property type="entry name" value="DNA-directed RNA polymerase, beta subunit, external 1 domain"/>
    <property type="match status" value="1"/>
</dbReference>
<dbReference type="Gene3D" id="2.40.270.10">
    <property type="entry name" value="DNA-directed RNA polymerase, subunit 2, domain 6"/>
    <property type="match status" value="1"/>
</dbReference>
<dbReference type="Gene3D" id="3.90.1800.10">
    <property type="entry name" value="RNA polymerase alpha subunit dimerisation domain"/>
    <property type="match status" value="1"/>
</dbReference>
<dbReference type="Gene3D" id="3.90.1110.10">
    <property type="entry name" value="RNA polymerase Rpb2, domain 2"/>
    <property type="match status" value="1"/>
</dbReference>
<dbReference type="HAMAP" id="MF_01321">
    <property type="entry name" value="RNApol_bact_RpoB"/>
    <property type="match status" value="1"/>
</dbReference>
<dbReference type="InterPro" id="IPR042107">
    <property type="entry name" value="DNA-dir_RNA_pol_bsu_ext_1_sf"/>
</dbReference>
<dbReference type="InterPro" id="IPR019462">
    <property type="entry name" value="DNA-dir_RNA_pol_bsu_external_1"/>
</dbReference>
<dbReference type="InterPro" id="IPR015712">
    <property type="entry name" value="DNA-dir_RNA_pol_su2"/>
</dbReference>
<dbReference type="InterPro" id="IPR007120">
    <property type="entry name" value="DNA-dir_RNAP_su2_dom"/>
</dbReference>
<dbReference type="InterPro" id="IPR037033">
    <property type="entry name" value="DNA-dir_RNAP_su2_hyb_sf"/>
</dbReference>
<dbReference type="InterPro" id="IPR010243">
    <property type="entry name" value="RNA_pol_bsu_bac"/>
</dbReference>
<dbReference type="InterPro" id="IPR007121">
    <property type="entry name" value="RNA_pol_bsu_CS"/>
</dbReference>
<dbReference type="InterPro" id="IPR007644">
    <property type="entry name" value="RNA_pol_bsu_protrusion"/>
</dbReference>
<dbReference type="InterPro" id="IPR007642">
    <property type="entry name" value="RNA_pol_Rpb2_2"/>
</dbReference>
<dbReference type="InterPro" id="IPR037034">
    <property type="entry name" value="RNA_pol_Rpb2_2_sf"/>
</dbReference>
<dbReference type="InterPro" id="IPR007645">
    <property type="entry name" value="RNA_pol_Rpb2_3"/>
</dbReference>
<dbReference type="InterPro" id="IPR007641">
    <property type="entry name" value="RNA_pol_Rpb2_7"/>
</dbReference>
<dbReference type="InterPro" id="IPR014724">
    <property type="entry name" value="RNA_pol_RPB2_OB-fold"/>
</dbReference>
<dbReference type="NCBIfam" id="NF001616">
    <property type="entry name" value="PRK00405.1"/>
    <property type="match status" value="1"/>
</dbReference>
<dbReference type="NCBIfam" id="TIGR02013">
    <property type="entry name" value="rpoB"/>
    <property type="match status" value="1"/>
</dbReference>
<dbReference type="PANTHER" id="PTHR20856">
    <property type="entry name" value="DNA-DIRECTED RNA POLYMERASE I SUBUNIT 2"/>
    <property type="match status" value="1"/>
</dbReference>
<dbReference type="Pfam" id="PF04563">
    <property type="entry name" value="RNA_pol_Rpb2_1"/>
    <property type="match status" value="1"/>
</dbReference>
<dbReference type="Pfam" id="PF04561">
    <property type="entry name" value="RNA_pol_Rpb2_2"/>
    <property type="match status" value="1"/>
</dbReference>
<dbReference type="Pfam" id="PF04565">
    <property type="entry name" value="RNA_pol_Rpb2_3"/>
    <property type="match status" value="1"/>
</dbReference>
<dbReference type="Pfam" id="PF10385">
    <property type="entry name" value="RNA_pol_Rpb2_45"/>
    <property type="match status" value="1"/>
</dbReference>
<dbReference type="Pfam" id="PF00562">
    <property type="entry name" value="RNA_pol_Rpb2_6"/>
    <property type="match status" value="1"/>
</dbReference>
<dbReference type="Pfam" id="PF04560">
    <property type="entry name" value="RNA_pol_Rpb2_7"/>
    <property type="match status" value="1"/>
</dbReference>
<dbReference type="SUPFAM" id="SSF64484">
    <property type="entry name" value="beta and beta-prime subunits of DNA dependent RNA-polymerase"/>
    <property type="match status" value="1"/>
</dbReference>
<dbReference type="PROSITE" id="PS01166">
    <property type="entry name" value="RNA_POL_BETA"/>
    <property type="match status" value="1"/>
</dbReference>
<gene>
    <name evidence="1" type="primary">rpoB</name>
    <name type="ordered locus">Francci3_0573</name>
</gene>
<sequence>MAASRSSSRISFAKIIEPLEVPDLLALQTQSFDWLIGSDAWAERVQEAIDSGRDDVPITSGLEEVFKEISPIEDFSGSMSLSFRDHRFEPPKYSVEECKDKDMTFSAPLFVTAEFTNNNTGEIKSQTVFMGDFPLMTPKGTFVINGTERVVVSQLVRSPGVYFERSLDKASDKDLYSCKVIPSRGAWLEFEIDKRDTVGVRIDRKRRQSVTVLLKALGWDEARILERFGDFPSMRITLEKDHTAGQDDALLDIYRKLRPGEPPTRESAQTLLENLFFNPKRYDLAKVGRYKVNKKLSLGVAHDVGVLTENDIVRTIEYVVKLHAGADPAEYEVDDIDHFGNRRIRTVGELIQNQVRLGLARMERVVRERMTTQDVEAITPQTLINIRPVVASIKEFFGTSQLSQFMDQTNPLAGLTHKRRLNALGPGGLSRERAGFEVRDVHPSHYGRMCPIETPEGPNIGLIGSLSTFARVNPFGFIETPYRKVENGRVTGQIDWLTADEEDRHVKAQANTPLRPDGSFAEDRVLVRRKGGEVEFIPPDEVDYMDVSPRQMVSVATAMIPFLEHDDANRALMGSNMQRQSVPLLRSEAPLVGTGMEARAAKDAGDVVVCAQAGVVEDLSADYITVMHDDGTRRTYRLAKFRRSNQGTCINQKPIVNEGDRVGAGQVIADGPCTDNGEMALGKNLLVAFMPWEGHNYEDAIILSQRLVQDDVLSSIHIEEHEVDARDTKLGPEEITRDIPNVAEEVLADLDERGIIRIGAEVSPGDVLVGKVTPKGETELTPEERLLRAIFGEKAREVRDTSLKVPHGESGKVIGVRVFSREDGDELPPGVNELVRVYVAQKRKITDGDKLAGRHGNKGVIAKILPAEDMPFLEDGTPVDVVLNPHGVPRRMNIGQILETHLGWVAKTGWQVDSGTEDWKERLRGIGADAASAGTNVATPVFDGAREEEITGLLDSTLPNRDGIQLIGSSGKAKLFDGRTGEPYPYPVAVGYIYILKLLHLVDDKIHARSTGPYSMITQQPLGGKAQFGGQRFGEMEVWALEAYGAAYALQELLTIKSDDVVGRVKVYEAIVKGENIPEPGIPESFKVLIKEMQSLCLNVEVLSSDGVQIEMRDTDEDVFRAAEELGIDLSRREPSSVEEV</sequence>
<comment type="function">
    <text evidence="1">DNA-dependent RNA polymerase catalyzes the transcription of DNA into RNA using the four ribonucleoside triphosphates as substrates.</text>
</comment>
<comment type="catalytic activity">
    <reaction evidence="1">
        <text>RNA(n) + a ribonucleoside 5'-triphosphate = RNA(n+1) + diphosphate</text>
        <dbReference type="Rhea" id="RHEA:21248"/>
        <dbReference type="Rhea" id="RHEA-COMP:14527"/>
        <dbReference type="Rhea" id="RHEA-COMP:17342"/>
        <dbReference type="ChEBI" id="CHEBI:33019"/>
        <dbReference type="ChEBI" id="CHEBI:61557"/>
        <dbReference type="ChEBI" id="CHEBI:140395"/>
        <dbReference type="EC" id="2.7.7.6"/>
    </reaction>
</comment>
<comment type="subunit">
    <text evidence="1">The RNAP catalytic core consists of 2 alpha, 1 beta, 1 beta' and 1 omega subunit. When a sigma factor is associated with the core the holoenzyme is formed, which can initiate transcription.</text>
</comment>
<comment type="similarity">
    <text evidence="1">Belongs to the RNA polymerase beta chain family.</text>
</comment>